<keyword id="KW-0539">Nucleus</keyword>
<keyword id="KW-1185">Reference proteome</keyword>
<keyword id="KW-0690">Ribosome biogenesis</keyword>
<keyword id="KW-0698">rRNA processing</keyword>
<accession>A7EFS3</accession>
<dbReference type="EMBL" id="CH476625">
    <property type="protein sequence ID" value="EDO01689.1"/>
    <property type="molecule type" value="Genomic_DNA"/>
</dbReference>
<dbReference type="RefSeq" id="XP_001594357.1">
    <property type="nucleotide sequence ID" value="XM_001594307.1"/>
</dbReference>
<dbReference type="SMR" id="A7EFS3"/>
<dbReference type="STRING" id="665079.A7EFS3"/>
<dbReference type="EnsemblFungi" id="EDO01689">
    <property type="protein sequence ID" value="EDO01689"/>
    <property type="gene ID" value="SS1G_04164"/>
</dbReference>
<dbReference type="GeneID" id="5490424"/>
<dbReference type="KEGG" id="ssl:SS1G_04164"/>
<dbReference type="VEuPathDB" id="FungiDB:sscle_02g018910"/>
<dbReference type="eggNOG" id="KOG2809">
    <property type="taxonomic scope" value="Eukaryota"/>
</dbReference>
<dbReference type="HOGENOM" id="CLU_052839_0_0_1"/>
<dbReference type="InParanoid" id="A7EFS3"/>
<dbReference type="OMA" id="PCWDQSS"/>
<dbReference type="OrthoDB" id="29523at2759"/>
<dbReference type="Proteomes" id="UP000001312">
    <property type="component" value="Unassembled WGS sequence"/>
</dbReference>
<dbReference type="GO" id="GO:0005730">
    <property type="term" value="C:nucleolus"/>
    <property type="evidence" value="ECO:0007669"/>
    <property type="project" value="UniProtKB-SubCell"/>
</dbReference>
<dbReference type="GO" id="GO:0003676">
    <property type="term" value="F:nucleic acid binding"/>
    <property type="evidence" value="ECO:0007669"/>
    <property type="project" value="InterPro"/>
</dbReference>
<dbReference type="GO" id="GO:0006364">
    <property type="term" value="P:rRNA processing"/>
    <property type="evidence" value="ECO:0007669"/>
    <property type="project" value="UniProtKB-KW"/>
</dbReference>
<dbReference type="InterPro" id="IPR000467">
    <property type="entry name" value="G_patch_dom"/>
</dbReference>
<dbReference type="InterPro" id="IPR050656">
    <property type="entry name" value="PINX1"/>
</dbReference>
<dbReference type="PANTHER" id="PTHR23149">
    <property type="entry name" value="G PATCH DOMAIN CONTAINING PROTEIN"/>
    <property type="match status" value="1"/>
</dbReference>
<dbReference type="PANTHER" id="PTHR23149:SF31">
    <property type="entry name" value="PROTEIN PXR1"/>
    <property type="match status" value="1"/>
</dbReference>
<dbReference type="Pfam" id="PF01585">
    <property type="entry name" value="G-patch"/>
    <property type="match status" value="1"/>
</dbReference>
<dbReference type="SMART" id="SM00443">
    <property type="entry name" value="G_patch"/>
    <property type="match status" value="1"/>
</dbReference>
<dbReference type="PROSITE" id="PS50174">
    <property type="entry name" value="G_PATCH"/>
    <property type="match status" value="1"/>
</dbReference>
<protein>
    <recommendedName>
        <fullName>Protein pxr1</fullName>
    </recommendedName>
    <alternativeName>
        <fullName>PinX1-related protein 1</fullName>
    </alternativeName>
</protein>
<sequence length="367" mass="40681">MGLSAPKNKIKLSHDPNNTKWSGNTDSFGHRMMKSQGWTPGEYLGAKDAAHAEFHTAANASHIRVVIKDNNLGLGAKIGSGVGHGECTGLDVFQNLLGRLNGKEEAEIEKEQKGREDLKRAIYAERKWGSIRFVRGGVLVGDKIQDLIDGEKERVKALKKGKTAESSSDDSDSSSDEEEEEKSPEPVTEKKKSSKRKREEQEEEEKTSSKKSKKDKKSKKRKSEDEDDKDKSESKKSKKSKKDRKSKSKSTSESETETLDEAAIKARKKEKKEKKRREKEAATAGADTEETSSTSKSSKKNSKKDKHKSSSASESSTKESTPTVTESSGRSTPMGIRSIRARHIAQKRMASMDVASLNQIFMIKSQT</sequence>
<feature type="chain" id="PRO_0000324896" description="Protein pxr1">
    <location>
        <begin position="1"/>
        <end position="367"/>
    </location>
</feature>
<feature type="domain" description="G-patch" evidence="2">
    <location>
        <begin position="25"/>
        <end position="79"/>
    </location>
</feature>
<feature type="region of interest" description="Disordered" evidence="3">
    <location>
        <begin position="1"/>
        <end position="28"/>
    </location>
</feature>
<feature type="region of interest" description="Disordered" evidence="3">
    <location>
        <begin position="156"/>
        <end position="336"/>
    </location>
</feature>
<feature type="compositionally biased region" description="Polar residues" evidence="3">
    <location>
        <begin position="15"/>
        <end position="27"/>
    </location>
</feature>
<feature type="compositionally biased region" description="Acidic residues" evidence="3">
    <location>
        <begin position="167"/>
        <end position="182"/>
    </location>
</feature>
<feature type="compositionally biased region" description="Basic residues" evidence="3">
    <location>
        <begin position="209"/>
        <end position="221"/>
    </location>
</feature>
<feature type="compositionally biased region" description="Basic residues" evidence="3">
    <location>
        <begin position="236"/>
        <end position="248"/>
    </location>
</feature>
<feature type="compositionally biased region" description="Basic residues" evidence="3">
    <location>
        <begin position="265"/>
        <end position="277"/>
    </location>
</feature>
<feature type="compositionally biased region" description="Low complexity" evidence="3">
    <location>
        <begin position="282"/>
        <end position="296"/>
    </location>
</feature>
<feature type="compositionally biased region" description="Basic residues" evidence="3">
    <location>
        <begin position="297"/>
        <end position="309"/>
    </location>
</feature>
<feature type="compositionally biased region" description="Low complexity" evidence="3">
    <location>
        <begin position="310"/>
        <end position="328"/>
    </location>
</feature>
<gene>
    <name type="primary">pxr1</name>
    <name type="ORF">SS1G_04164</name>
</gene>
<proteinExistence type="inferred from homology"/>
<comment type="function">
    <text evidence="1">Involved in rRNA-processing at A0, A1 and A2 sites and negatively regulates telomerase.</text>
</comment>
<comment type="subcellular location">
    <subcellularLocation>
        <location evidence="1">Nucleus</location>
        <location evidence="1">Nucleolus</location>
    </subcellularLocation>
</comment>
<comment type="similarity">
    <text evidence="4">Belongs to the PINX1 family.</text>
</comment>
<reference key="1">
    <citation type="journal article" date="2011" name="PLoS Genet.">
        <title>Genomic analysis of the necrotrophic fungal pathogens Sclerotinia sclerotiorum and Botrytis cinerea.</title>
        <authorList>
            <person name="Amselem J."/>
            <person name="Cuomo C.A."/>
            <person name="van Kan J.A.L."/>
            <person name="Viaud M."/>
            <person name="Benito E.P."/>
            <person name="Couloux A."/>
            <person name="Coutinho P.M."/>
            <person name="de Vries R.P."/>
            <person name="Dyer P.S."/>
            <person name="Fillinger S."/>
            <person name="Fournier E."/>
            <person name="Gout L."/>
            <person name="Hahn M."/>
            <person name="Kohn L."/>
            <person name="Lapalu N."/>
            <person name="Plummer K.M."/>
            <person name="Pradier J.-M."/>
            <person name="Quevillon E."/>
            <person name="Sharon A."/>
            <person name="Simon A."/>
            <person name="ten Have A."/>
            <person name="Tudzynski B."/>
            <person name="Tudzynski P."/>
            <person name="Wincker P."/>
            <person name="Andrew M."/>
            <person name="Anthouard V."/>
            <person name="Beever R.E."/>
            <person name="Beffa R."/>
            <person name="Benoit I."/>
            <person name="Bouzid O."/>
            <person name="Brault B."/>
            <person name="Chen Z."/>
            <person name="Choquer M."/>
            <person name="Collemare J."/>
            <person name="Cotton P."/>
            <person name="Danchin E.G."/>
            <person name="Da Silva C."/>
            <person name="Gautier A."/>
            <person name="Giraud C."/>
            <person name="Giraud T."/>
            <person name="Gonzalez C."/>
            <person name="Grossetete S."/>
            <person name="Gueldener U."/>
            <person name="Henrissat B."/>
            <person name="Howlett B.J."/>
            <person name="Kodira C."/>
            <person name="Kretschmer M."/>
            <person name="Lappartient A."/>
            <person name="Leroch M."/>
            <person name="Levis C."/>
            <person name="Mauceli E."/>
            <person name="Neuveglise C."/>
            <person name="Oeser B."/>
            <person name="Pearson M."/>
            <person name="Poulain J."/>
            <person name="Poussereau N."/>
            <person name="Quesneville H."/>
            <person name="Rascle C."/>
            <person name="Schumacher J."/>
            <person name="Segurens B."/>
            <person name="Sexton A."/>
            <person name="Silva E."/>
            <person name="Sirven C."/>
            <person name="Soanes D.M."/>
            <person name="Talbot N.J."/>
            <person name="Templeton M."/>
            <person name="Yandava C."/>
            <person name="Yarden O."/>
            <person name="Zeng Q."/>
            <person name="Rollins J.A."/>
            <person name="Lebrun M.-H."/>
            <person name="Dickman M."/>
        </authorList>
    </citation>
    <scope>NUCLEOTIDE SEQUENCE [LARGE SCALE GENOMIC DNA]</scope>
    <source>
        <strain>ATCC 18683 / 1980 / Ss-1</strain>
    </source>
</reference>
<evidence type="ECO:0000250" key="1"/>
<evidence type="ECO:0000255" key="2">
    <source>
        <dbReference type="PROSITE-ProRule" id="PRU00092"/>
    </source>
</evidence>
<evidence type="ECO:0000256" key="3">
    <source>
        <dbReference type="SAM" id="MobiDB-lite"/>
    </source>
</evidence>
<evidence type="ECO:0000305" key="4"/>
<organism>
    <name type="scientific">Sclerotinia sclerotiorum (strain ATCC 18683 / 1980 / Ss-1)</name>
    <name type="common">White mold</name>
    <name type="synonym">Whetzelinia sclerotiorum</name>
    <dbReference type="NCBI Taxonomy" id="665079"/>
    <lineage>
        <taxon>Eukaryota</taxon>
        <taxon>Fungi</taxon>
        <taxon>Dikarya</taxon>
        <taxon>Ascomycota</taxon>
        <taxon>Pezizomycotina</taxon>
        <taxon>Leotiomycetes</taxon>
        <taxon>Helotiales</taxon>
        <taxon>Sclerotiniaceae</taxon>
        <taxon>Sclerotinia</taxon>
    </lineage>
</organism>
<name>PXR1_SCLS1</name>